<accession>B3A0G9</accession>
<dbReference type="GO" id="GO:0005576">
    <property type="term" value="C:extracellular region"/>
    <property type="evidence" value="ECO:0007669"/>
    <property type="project" value="UniProtKB-SubCell"/>
</dbReference>
<dbReference type="GO" id="GO:0007218">
    <property type="term" value="P:neuropeptide signaling pathway"/>
    <property type="evidence" value="ECO:0007669"/>
    <property type="project" value="UniProtKB-KW"/>
</dbReference>
<sequence length="13" mass="1535">AELPQGLWVRPRL</sequence>
<organism>
    <name type="scientific">Praedatophasma maraisi</name>
    <name type="common">Gladiator</name>
    <name type="synonym">Heel-walker</name>
    <dbReference type="NCBI Taxonomy" id="409170"/>
    <lineage>
        <taxon>Eukaryota</taxon>
        <taxon>Metazoa</taxon>
        <taxon>Ecdysozoa</taxon>
        <taxon>Arthropoda</taxon>
        <taxon>Hexapoda</taxon>
        <taxon>Insecta</taxon>
        <taxon>Pterygota</taxon>
        <taxon>Neoptera</taxon>
        <taxon>Polyneoptera</taxon>
        <taxon>Mantophasmatodea</taxon>
        <taxon>Mantophasmatidae</taxon>
        <taxon>Praedatophasma</taxon>
    </lineage>
</organism>
<proteinExistence type="evidence at protein level"/>
<protein>
    <recommendedName>
        <fullName evidence="4">Pyrokinin-4</fullName>
        <shortName evidence="4">PK-4</shortName>
    </recommendedName>
</protein>
<evidence type="ECO:0000250" key="1">
    <source>
        <dbReference type="UniProtKB" id="P82619"/>
    </source>
</evidence>
<evidence type="ECO:0000255" key="2"/>
<evidence type="ECO:0000269" key="3">
    <source>
    </source>
</evidence>
<evidence type="ECO:0000303" key="4">
    <source>
    </source>
</evidence>
<evidence type="ECO:0000305" key="5"/>
<evidence type="ECO:0000305" key="6">
    <source>
    </source>
</evidence>
<feature type="peptide" id="PRO_0000421608" description="Pyrokinin-4" evidence="3">
    <location>
        <begin position="1"/>
        <end position="13"/>
    </location>
</feature>
<feature type="modified residue" description="Leucine amide" evidence="3">
    <location>
        <position position="13"/>
    </location>
</feature>
<name>PPK4_PRAMA</name>
<keyword id="KW-0027">Amidation</keyword>
<keyword id="KW-0903">Direct protein sequencing</keyword>
<keyword id="KW-0527">Neuropeptide</keyword>
<keyword id="KW-0964">Secreted</keyword>
<comment type="function">
    <text evidence="1">Myoactive.</text>
</comment>
<comment type="subcellular location">
    <subcellularLocation>
        <location evidence="6">Secreted</location>
    </subcellularLocation>
</comment>
<comment type="similarity">
    <text evidence="2">Belongs to the pyrokinin family.</text>
</comment>
<reference evidence="5" key="1">
    <citation type="journal article" date="2012" name="Syst. Biol.">
        <title>Peptidomics-based phylogeny and biogeography of Mantophasmatodea (Hexapoda).</title>
        <authorList>
            <person name="Predel R."/>
            <person name="Neupert S."/>
            <person name="Huetteroth W."/>
            <person name="Kahnt J."/>
            <person name="Waidelich D."/>
            <person name="Roth S."/>
        </authorList>
    </citation>
    <scope>PROTEIN SEQUENCE</scope>
    <scope>AMIDATION AT LEU-13</scope>
    <source>
        <tissue evidence="3">Corpora cardiaca</tissue>
    </source>
</reference>